<reference key="1">
    <citation type="journal article" date="2004" name="Proc. Natl. Acad. Sci. U.S.A.">
        <title>Genomic analysis of Bacteroides fragilis reveals extensive DNA inversions regulating cell surface adaptation.</title>
        <authorList>
            <person name="Kuwahara T."/>
            <person name="Yamashita A."/>
            <person name="Hirakawa H."/>
            <person name="Nakayama H."/>
            <person name="Toh H."/>
            <person name="Okada N."/>
            <person name="Kuhara S."/>
            <person name="Hattori M."/>
            <person name="Hayashi T."/>
            <person name="Ohnishi Y."/>
        </authorList>
    </citation>
    <scope>NUCLEOTIDE SEQUENCE [LARGE SCALE GENOMIC DNA]</scope>
    <source>
        <strain>YCH46</strain>
    </source>
</reference>
<feature type="chain" id="PRO_0000286197" description="Spermidine/putrescine import ATP-binding protein PotA">
    <location>
        <begin position="1"/>
        <end position="461"/>
    </location>
</feature>
<feature type="domain" description="ABC transporter" evidence="1">
    <location>
        <begin position="10"/>
        <end position="240"/>
    </location>
</feature>
<feature type="binding site" evidence="1">
    <location>
        <begin position="42"/>
        <end position="49"/>
    </location>
    <ligand>
        <name>ATP</name>
        <dbReference type="ChEBI" id="CHEBI:30616"/>
    </ligand>
</feature>
<dbReference type="EC" id="7.6.2.11" evidence="1"/>
<dbReference type="EMBL" id="AP006841">
    <property type="protein sequence ID" value="BAD49473.1"/>
    <property type="status" value="ALT_INIT"/>
    <property type="molecule type" value="Genomic_DNA"/>
</dbReference>
<dbReference type="RefSeq" id="YP_100007.1">
    <property type="nucleotide sequence ID" value="NC_006347.1"/>
</dbReference>
<dbReference type="SMR" id="Q64SQ6"/>
<dbReference type="STRING" id="295405.BF2723"/>
<dbReference type="KEGG" id="bfr:BF2723"/>
<dbReference type="PATRIC" id="fig|295405.11.peg.2631"/>
<dbReference type="HOGENOM" id="CLU_000604_1_1_10"/>
<dbReference type="OrthoDB" id="1114670at2"/>
<dbReference type="Proteomes" id="UP000002197">
    <property type="component" value="Chromosome"/>
</dbReference>
<dbReference type="GO" id="GO:0043190">
    <property type="term" value="C:ATP-binding cassette (ABC) transporter complex"/>
    <property type="evidence" value="ECO:0007669"/>
    <property type="project" value="InterPro"/>
</dbReference>
<dbReference type="GO" id="GO:0015594">
    <property type="term" value="F:ABC-type putrescine transporter activity"/>
    <property type="evidence" value="ECO:0007669"/>
    <property type="project" value="InterPro"/>
</dbReference>
<dbReference type="GO" id="GO:0005524">
    <property type="term" value="F:ATP binding"/>
    <property type="evidence" value="ECO:0007669"/>
    <property type="project" value="UniProtKB-KW"/>
</dbReference>
<dbReference type="GO" id="GO:0016887">
    <property type="term" value="F:ATP hydrolysis activity"/>
    <property type="evidence" value="ECO:0007669"/>
    <property type="project" value="InterPro"/>
</dbReference>
<dbReference type="CDD" id="cd03300">
    <property type="entry name" value="ABC_PotA_N"/>
    <property type="match status" value="1"/>
</dbReference>
<dbReference type="FunFam" id="3.40.50.300:FF:000133">
    <property type="entry name" value="Spermidine/putrescine import ATP-binding protein PotA"/>
    <property type="match status" value="1"/>
</dbReference>
<dbReference type="Gene3D" id="2.40.50.100">
    <property type="match status" value="1"/>
</dbReference>
<dbReference type="Gene3D" id="3.40.50.300">
    <property type="entry name" value="P-loop containing nucleotide triphosphate hydrolases"/>
    <property type="match status" value="1"/>
</dbReference>
<dbReference type="InterPro" id="IPR003593">
    <property type="entry name" value="AAA+_ATPase"/>
</dbReference>
<dbReference type="InterPro" id="IPR050093">
    <property type="entry name" value="ABC_SmlMolc_Importer"/>
</dbReference>
<dbReference type="InterPro" id="IPR003439">
    <property type="entry name" value="ABC_transporter-like_ATP-bd"/>
</dbReference>
<dbReference type="InterPro" id="IPR017871">
    <property type="entry name" value="ABC_transporter-like_CS"/>
</dbReference>
<dbReference type="InterPro" id="IPR008995">
    <property type="entry name" value="Mo/tungstate-bd_C_term_dom"/>
</dbReference>
<dbReference type="InterPro" id="IPR027417">
    <property type="entry name" value="P-loop_NTPase"/>
</dbReference>
<dbReference type="InterPro" id="IPR005893">
    <property type="entry name" value="PotA-like"/>
</dbReference>
<dbReference type="InterPro" id="IPR017879">
    <property type="entry name" value="PotA_ATP-bd"/>
</dbReference>
<dbReference type="InterPro" id="IPR013611">
    <property type="entry name" value="Transp-assoc_OB_typ2"/>
</dbReference>
<dbReference type="NCBIfam" id="TIGR01187">
    <property type="entry name" value="potA"/>
    <property type="match status" value="1"/>
</dbReference>
<dbReference type="PANTHER" id="PTHR42781">
    <property type="entry name" value="SPERMIDINE/PUTRESCINE IMPORT ATP-BINDING PROTEIN POTA"/>
    <property type="match status" value="1"/>
</dbReference>
<dbReference type="PANTHER" id="PTHR42781:SF4">
    <property type="entry name" value="SPERMIDINE_PUTRESCINE IMPORT ATP-BINDING PROTEIN POTA"/>
    <property type="match status" value="1"/>
</dbReference>
<dbReference type="Pfam" id="PF00005">
    <property type="entry name" value="ABC_tran"/>
    <property type="match status" value="1"/>
</dbReference>
<dbReference type="Pfam" id="PF08402">
    <property type="entry name" value="TOBE_2"/>
    <property type="match status" value="2"/>
</dbReference>
<dbReference type="SMART" id="SM00382">
    <property type="entry name" value="AAA"/>
    <property type="match status" value="1"/>
</dbReference>
<dbReference type="SUPFAM" id="SSF50331">
    <property type="entry name" value="MOP-like"/>
    <property type="match status" value="2"/>
</dbReference>
<dbReference type="SUPFAM" id="SSF52540">
    <property type="entry name" value="P-loop containing nucleoside triphosphate hydrolases"/>
    <property type="match status" value="1"/>
</dbReference>
<dbReference type="PROSITE" id="PS00211">
    <property type="entry name" value="ABC_TRANSPORTER_1"/>
    <property type="match status" value="1"/>
</dbReference>
<dbReference type="PROSITE" id="PS50893">
    <property type="entry name" value="ABC_TRANSPORTER_2"/>
    <property type="match status" value="1"/>
</dbReference>
<dbReference type="PROSITE" id="PS51305">
    <property type="entry name" value="POTA"/>
    <property type="match status" value="1"/>
</dbReference>
<name>POTA_BACFR</name>
<organism>
    <name type="scientific">Bacteroides fragilis (strain YCH46)</name>
    <dbReference type="NCBI Taxonomy" id="295405"/>
    <lineage>
        <taxon>Bacteria</taxon>
        <taxon>Pseudomonadati</taxon>
        <taxon>Bacteroidota</taxon>
        <taxon>Bacteroidia</taxon>
        <taxon>Bacteroidales</taxon>
        <taxon>Bacteroidaceae</taxon>
        <taxon>Bacteroides</taxon>
    </lineage>
</organism>
<evidence type="ECO:0000255" key="1">
    <source>
        <dbReference type="HAMAP-Rule" id="MF_01726"/>
    </source>
</evidence>
<evidence type="ECO:0000305" key="2"/>
<proteinExistence type="inferred from homology"/>
<gene>
    <name evidence="1" type="primary">potA</name>
    <name type="ordered locus">BF2723</name>
</gene>
<keyword id="KW-0067">ATP-binding</keyword>
<keyword id="KW-0997">Cell inner membrane</keyword>
<keyword id="KW-1003">Cell membrane</keyword>
<keyword id="KW-0472">Membrane</keyword>
<keyword id="KW-0547">Nucleotide-binding</keyword>
<keyword id="KW-1278">Translocase</keyword>
<keyword id="KW-0813">Transport</keyword>
<protein>
    <recommendedName>
        <fullName evidence="1">Spermidine/putrescine import ATP-binding protein PotA</fullName>
        <ecNumber evidence="1">7.6.2.11</ecNumber>
    </recommendedName>
</protein>
<sequence length="461" mass="51591">MNMQESKSIIEVNGVSKFFGEKTALDHVTLNVKKGEFVTILGPSGCGKTTLLRLIAGFQTASEGEIKISGKEITQTPPHKRPVNTVFQKYALFPHLNVYDNIAFGLKLKKMPKQTIEKKVKAALKMVGMTDYEYRDVDSLSGGQQQRVAIARAIVNEPEVLLLDEPLAALDLKMRKDMQMELKEMHKSLGITFVYVTHDQEEALTLSDTIVVMSEGRIQQIGTPIDIYNEPINSFVADFIGESNILNGVMIHDKLVRFCNTEFECVDEGFGENMPVDVVIRPEDLYIFPVSEAAQLTGVVQSSVFKGVHYEMTVLCNGYEFLVQDYHHFEVGALVGLLVKPFDIHIMKKERVCNTFEGKLIDETHVEFLGCNFECAPVTGIEAGSEVKVEVGFDNVILQDNEEDGALTGEVKFILYKGDHYHLTVLSDWDENVFVDTNDVWDDGDRVGITIPPDGIRVIKN</sequence>
<accession>Q64SQ6</accession>
<comment type="function">
    <text evidence="1">Part of the ABC transporter complex PotABCD involved in spermidine/putrescine import. Responsible for energy coupling to the transport system.</text>
</comment>
<comment type="catalytic activity">
    <reaction evidence="1">
        <text>ATP + H2O + polyamine-[polyamine-binding protein]Side 1 = ADP + phosphate + polyamineSide 2 + [polyamine-binding protein]Side 1.</text>
        <dbReference type="EC" id="7.6.2.11"/>
    </reaction>
</comment>
<comment type="subunit">
    <text evidence="1">The complex is composed of two ATP-binding proteins (PotA), two transmembrane proteins (PotB and PotC) and a solute-binding protein (PotD).</text>
</comment>
<comment type="subcellular location">
    <subcellularLocation>
        <location evidence="1">Cell inner membrane</location>
        <topology evidence="1">Peripheral membrane protein</topology>
    </subcellularLocation>
</comment>
<comment type="similarity">
    <text evidence="1">Belongs to the ABC transporter superfamily. Spermidine/putrescine importer (TC 3.A.1.11.1) family.</text>
</comment>
<comment type="sequence caution" evidence="2">
    <conflict type="erroneous initiation">
        <sequence resource="EMBL-CDS" id="BAD49473"/>
    </conflict>
</comment>